<feature type="chain" id="PRO_1000001670" description="UPF0758 protein Neut_0782">
    <location>
        <begin position="1"/>
        <end position="224"/>
    </location>
</feature>
<feature type="domain" description="MPN" evidence="1">
    <location>
        <begin position="102"/>
        <end position="224"/>
    </location>
</feature>
<feature type="short sequence motif" description="JAMM motif" evidence="1">
    <location>
        <begin position="173"/>
        <end position="186"/>
    </location>
</feature>
<feature type="binding site" evidence="1">
    <location>
        <position position="173"/>
    </location>
    <ligand>
        <name>Zn(2+)</name>
        <dbReference type="ChEBI" id="CHEBI:29105"/>
        <note>catalytic</note>
    </ligand>
</feature>
<feature type="binding site" evidence="1">
    <location>
        <position position="175"/>
    </location>
    <ligand>
        <name>Zn(2+)</name>
        <dbReference type="ChEBI" id="CHEBI:29105"/>
        <note>catalytic</note>
    </ligand>
</feature>
<feature type="binding site" evidence="1">
    <location>
        <position position="186"/>
    </location>
    <ligand>
        <name>Zn(2+)</name>
        <dbReference type="ChEBI" id="CHEBI:29105"/>
        <note>catalytic</note>
    </ligand>
</feature>
<proteinExistence type="inferred from homology"/>
<gene>
    <name type="ordered locus">Neut_0782</name>
</gene>
<keyword id="KW-0378">Hydrolase</keyword>
<keyword id="KW-0479">Metal-binding</keyword>
<keyword id="KW-0482">Metalloprotease</keyword>
<keyword id="KW-0645">Protease</keyword>
<keyword id="KW-0862">Zinc</keyword>
<sequence>MAISDWPEAERPREKLIQKGATVLSDAELLAIFLRTGITGKSAVELARNLLTHFGSLTKLCAANLHEFSKLPGMGPAKFAQLQAVMEMARRALAEELKSGDIMDSPQSVRSYLRLSLGGKPHEVFVGIFLDARHRTIMIEELFRGTLTQASVYPREVVKRALYHNAAAMIFAHNHPSGVAEPSRADEMLTQSLKQALALVDVKVLDHFVIGNNETVSFAERGLI</sequence>
<dbReference type="EMBL" id="CP000450">
    <property type="protein sequence ID" value="ABI59052.1"/>
    <property type="molecule type" value="Genomic_DNA"/>
</dbReference>
<dbReference type="RefSeq" id="WP_011633877.1">
    <property type="nucleotide sequence ID" value="NC_008344.1"/>
</dbReference>
<dbReference type="SMR" id="Q0AHY0"/>
<dbReference type="STRING" id="335283.Neut_0782"/>
<dbReference type="KEGG" id="net:Neut_0782"/>
<dbReference type="eggNOG" id="COG2003">
    <property type="taxonomic scope" value="Bacteria"/>
</dbReference>
<dbReference type="HOGENOM" id="CLU_073529_0_1_4"/>
<dbReference type="OrthoDB" id="9804482at2"/>
<dbReference type="Proteomes" id="UP000001966">
    <property type="component" value="Chromosome"/>
</dbReference>
<dbReference type="GO" id="GO:0046872">
    <property type="term" value="F:metal ion binding"/>
    <property type="evidence" value="ECO:0007669"/>
    <property type="project" value="UniProtKB-KW"/>
</dbReference>
<dbReference type="GO" id="GO:0008237">
    <property type="term" value="F:metallopeptidase activity"/>
    <property type="evidence" value="ECO:0007669"/>
    <property type="project" value="UniProtKB-KW"/>
</dbReference>
<dbReference type="GO" id="GO:0006508">
    <property type="term" value="P:proteolysis"/>
    <property type="evidence" value="ECO:0007669"/>
    <property type="project" value="UniProtKB-KW"/>
</dbReference>
<dbReference type="CDD" id="cd08071">
    <property type="entry name" value="MPN_DUF2466"/>
    <property type="match status" value="1"/>
</dbReference>
<dbReference type="Gene3D" id="1.10.150.20">
    <property type="entry name" value="5' to 3' exonuclease, C-terminal subdomain"/>
    <property type="match status" value="1"/>
</dbReference>
<dbReference type="Gene3D" id="3.40.140.10">
    <property type="entry name" value="Cytidine Deaminase, domain 2"/>
    <property type="match status" value="1"/>
</dbReference>
<dbReference type="InterPro" id="IPR037518">
    <property type="entry name" value="MPN"/>
</dbReference>
<dbReference type="InterPro" id="IPR025657">
    <property type="entry name" value="RadC_JAB"/>
</dbReference>
<dbReference type="InterPro" id="IPR010994">
    <property type="entry name" value="RuvA_2-like"/>
</dbReference>
<dbReference type="InterPro" id="IPR001405">
    <property type="entry name" value="UPF0758"/>
</dbReference>
<dbReference type="InterPro" id="IPR020891">
    <property type="entry name" value="UPF0758_CS"/>
</dbReference>
<dbReference type="InterPro" id="IPR046778">
    <property type="entry name" value="UPF0758_N"/>
</dbReference>
<dbReference type="NCBIfam" id="NF000642">
    <property type="entry name" value="PRK00024.1"/>
    <property type="match status" value="1"/>
</dbReference>
<dbReference type="NCBIfam" id="TIGR00608">
    <property type="entry name" value="radc"/>
    <property type="match status" value="1"/>
</dbReference>
<dbReference type="PANTHER" id="PTHR30471">
    <property type="entry name" value="DNA REPAIR PROTEIN RADC"/>
    <property type="match status" value="1"/>
</dbReference>
<dbReference type="PANTHER" id="PTHR30471:SF3">
    <property type="entry name" value="UPF0758 PROTEIN YEES-RELATED"/>
    <property type="match status" value="1"/>
</dbReference>
<dbReference type="Pfam" id="PF04002">
    <property type="entry name" value="RadC"/>
    <property type="match status" value="1"/>
</dbReference>
<dbReference type="Pfam" id="PF20582">
    <property type="entry name" value="UPF0758_N"/>
    <property type="match status" value="1"/>
</dbReference>
<dbReference type="SUPFAM" id="SSF47781">
    <property type="entry name" value="RuvA domain 2-like"/>
    <property type="match status" value="1"/>
</dbReference>
<dbReference type="PROSITE" id="PS50249">
    <property type="entry name" value="MPN"/>
    <property type="match status" value="1"/>
</dbReference>
<dbReference type="PROSITE" id="PS01302">
    <property type="entry name" value="UPF0758"/>
    <property type="match status" value="1"/>
</dbReference>
<accession>Q0AHY0</accession>
<name>Y782_NITEC</name>
<evidence type="ECO:0000255" key="1">
    <source>
        <dbReference type="PROSITE-ProRule" id="PRU01182"/>
    </source>
</evidence>
<evidence type="ECO:0000305" key="2"/>
<organism>
    <name type="scientific">Nitrosomonas eutropha (strain DSM 101675 / C91 / Nm57)</name>
    <dbReference type="NCBI Taxonomy" id="335283"/>
    <lineage>
        <taxon>Bacteria</taxon>
        <taxon>Pseudomonadati</taxon>
        <taxon>Pseudomonadota</taxon>
        <taxon>Betaproteobacteria</taxon>
        <taxon>Nitrosomonadales</taxon>
        <taxon>Nitrosomonadaceae</taxon>
        <taxon>Nitrosomonas</taxon>
    </lineage>
</organism>
<comment type="similarity">
    <text evidence="2">Belongs to the UPF0758 family.</text>
</comment>
<protein>
    <recommendedName>
        <fullName>UPF0758 protein Neut_0782</fullName>
    </recommendedName>
</protein>
<reference key="1">
    <citation type="journal article" date="2007" name="Environ. Microbiol.">
        <title>Whole-genome analysis of the ammonia-oxidizing bacterium, Nitrosomonas eutropha C91: implications for niche adaptation.</title>
        <authorList>
            <person name="Stein L.Y."/>
            <person name="Arp D.J."/>
            <person name="Berube P.M."/>
            <person name="Chain P.S."/>
            <person name="Hauser L."/>
            <person name="Jetten M.S."/>
            <person name="Klotz M.G."/>
            <person name="Larimer F.W."/>
            <person name="Norton J.M."/>
            <person name="Op den Camp H.J.M."/>
            <person name="Shin M."/>
            <person name="Wei X."/>
        </authorList>
    </citation>
    <scope>NUCLEOTIDE SEQUENCE [LARGE SCALE GENOMIC DNA]</scope>
    <source>
        <strain>DSM 101675 / C91 / Nm57</strain>
    </source>
</reference>